<accession>Q4ZWR4</accession>
<proteinExistence type="inferred from homology"/>
<protein>
    <recommendedName>
        <fullName evidence="1">Ribonuclease HII</fullName>
        <shortName evidence="1">RNase HII</shortName>
        <ecNumber evidence="1">3.1.26.4</ecNumber>
    </recommendedName>
</protein>
<evidence type="ECO:0000255" key="1">
    <source>
        <dbReference type="HAMAP-Rule" id="MF_00052"/>
    </source>
</evidence>
<evidence type="ECO:0000255" key="2">
    <source>
        <dbReference type="PROSITE-ProRule" id="PRU01319"/>
    </source>
</evidence>
<dbReference type="EC" id="3.1.26.4" evidence="1"/>
<dbReference type="EMBL" id="CP000075">
    <property type="protein sequence ID" value="AAY36408.1"/>
    <property type="molecule type" value="Genomic_DNA"/>
</dbReference>
<dbReference type="RefSeq" id="YP_234446.1">
    <property type="nucleotide sequence ID" value="NC_007005.1"/>
</dbReference>
<dbReference type="SMR" id="Q4ZWR4"/>
<dbReference type="STRING" id="205918.Psyr_1357"/>
<dbReference type="KEGG" id="psb:Psyr_1357"/>
<dbReference type="PATRIC" id="fig|205918.7.peg.1390"/>
<dbReference type="eggNOG" id="COG0164">
    <property type="taxonomic scope" value="Bacteria"/>
</dbReference>
<dbReference type="HOGENOM" id="CLU_036532_3_2_6"/>
<dbReference type="OrthoDB" id="9803420at2"/>
<dbReference type="Proteomes" id="UP000000426">
    <property type="component" value="Chromosome"/>
</dbReference>
<dbReference type="GO" id="GO:0005737">
    <property type="term" value="C:cytoplasm"/>
    <property type="evidence" value="ECO:0007669"/>
    <property type="project" value="UniProtKB-SubCell"/>
</dbReference>
<dbReference type="GO" id="GO:0032299">
    <property type="term" value="C:ribonuclease H2 complex"/>
    <property type="evidence" value="ECO:0007669"/>
    <property type="project" value="TreeGrafter"/>
</dbReference>
<dbReference type="GO" id="GO:0030145">
    <property type="term" value="F:manganese ion binding"/>
    <property type="evidence" value="ECO:0007669"/>
    <property type="project" value="UniProtKB-UniRule"/>
</dbReference>
<dbReference type="GO" id="GO:0003723">
    <property type="term" value="F:RNA binding"/>
    <property type="evidence" value="ECO:0007669"/>
    <property type="project" value="InterPro"/>
</dbReference>
<dbReference type="GO" id="GO:0004523">
    <property type="term" value="F:RNA-DNA hybrid ribonuclease activity"/>
    <property type="evidence" value="ECO:0007669"/>
    <property type="project" value="UniProtKB-UniRule"/>
</dbReference>
<dbReference type="GO" id="GO:0043137">
    <property type="term" value="P:DNA replication, removal of RNA primer"/>
    <property type="evidence" value="ECO:0007669"/>
    <property type="project" value="TreeGrafter"/>
</dbReference>
<dbReference type="GO" id="GO:0006298">
    <property type="term" value="P:mismatch repair"/>
    <property type="evidence" value="ECO:0007669"/>
    <property type="project" value="TreeGrafter"/>
</dbReference>
<dbReference type="CDD" id="cd07182">
    <property type="entry name" value="RNase_HII_bacteria_HII_like"/>
    <property type="match status" value="1"/>
</dbReference>
<dbReference type="FunFam" id="3.30.420.10:FF:000006">
    <property type="entry name" value="Ribonuclease HII"/>
    <property type="match status" value="1"/>
</dbReference>
<dbReference type="Gene3D" id="3.30.420.10">
    <property type="entry name" value="Ribonuclease H-like superfamily/Ribonuclease H"/>
    <property type="match status" value="1"/>
</dbReference>
<dbReference type="HAMAP" id="MF_00052_B">
    <property type="entry name" value="RNase_HII_B"/>
    <property type="match status" value="1"/>
</dbReference>
<dbReference type="InterPro" id="IPR022898">
    <property type="entry name" value="RNase_HII"/>
</dbReference>
<dbReference type="InterPro" id="IPR001352">
    <property type="entry name" value="RNase_HII/HIII"/>
</dbReference>
<dbReference type="InterPro" id="IPR024567">
    <property type="entry name" value="RNase_HII/HIII_dom"/>
</dbReference>
<dbReference type="InterPro" id="IPR012337">
    <property type="entry name" value="RNaseH-like_sf"/>
</dbReference>
<dbReference type="InterPro" id="IPR036397">
    <property type="entry name" value="RNaseH_sf"/>
</dbReference>
<dbReference type="NCBIfam" id="NF000595">
    <property type="entry name" value="PRK00015.1-3"/>
    <property type="match status" value="1"/>
</dbReference>
<dbReference type="NCBIfam" id="NF000596">
    <property type="entry name" value="PRK00015.1-4"/>
    <property type="match status" value="1"/>
</dbReference>
<dbReference type="PANTHER" id="PTHR10954">
    <property type="entry name" value="RIBONUCLEASE H2 SUBUNIT A"/>
    <property type="match status" value="1"/>
</dbReference>
<dbReference type="PANTHER" id="PTHR10954:SF18">
    <property type="entry name" value="RIBONUCLEASE HII"/>
    <property type="match status" value="1"/>
</dbReference>
<dbReference type="Pfam" id="PF01351">
    <property type="entry name" value="RNase_HII"/>
    <property type="match status" value="1"/>
</dbReference>
<dbReference type="SUPFAM" id="SSF53098">
    <property type="entry name" value="Ribonuclease H-like"/>
    <property type="match status" value="1"/>
</dbReference>
<dbReference type="PROSITE" id="PS51975">
    <property type="entry name" value="RNASE_H_2"/>
    <property type="match status" value="1"/>
</dbReference>
<name>RNH2_PSEU2</name>
<feature type="chain" id="PRO_0000235756" description="Ribonuclease HII">
    <location>
        <begin position="1"/>
        <end position="218"/>
    </location>
</feature>
<feature type="domain" description="RNase H type-2" evidence="2">
    <location>
        <begin position="13"/>
        <end position="202"/>
    </location>
</feature>
<feature type="binding site" evidence="1">
    <location>
        <position position="19"/>
    </location>
    <ligand>
        <name>a divalent metal cation</name>
        <dbReference type="ChEBI" id="CHEBI:60240"/>
    </ligand>
</feature>
<feature type="binding site" evidence="1">
    <location>
        <position position="20"/>
    </location>
    <ligand>
        <name>a divalent metal cation</name>
        <dbReference type="ChEBI" id="CHEBI:60240"/>
    </ligand>
</feature>
<feature type="binding site" evidence="1">
    <location>
        <position position="111"/>
    </location>
    <ligand>
        <name>a divalent metal cation</name>
        <dbReference type="ChEBI" id="CHEBI:60240"/>
    </ligand>
</feature>
<organism>
    <name type="scientific">Pseudomonas syringae pv. syringae (strain B728a)</name>
    <dbReference type="NCBI Taxonomy" id="205918"/>
    <lineage>
        <taxon>Bacteria</taxon>
        <taxon>Pseudomonadati</taxon>
        <taxon>Pseudomonadota</taxon>
        <taxon>Gammaproteobacteria</taxon>
        <taxon>Pseudomonadales</taxon>
        <taxon>Pseudomonadaceae</taxon>
        <taxon>Pseudomonas</taxon>
        <taxon>Pseudomonas syringae</taxon>
    </lineage>
</organism>
<keyword id="KW-0963">Cytoplasm</keyword>
<keyword id="KW-0255">Endonuclease</keyword>
<keyword id="KW-0378">Hydrolase</keyword>
<keyword id="KW-0464">Manganese</keyword>
<keyword id="KW-0479">Metal-binding</keyword>
<keyword id="KW-0540">Nuclease</keyword>
<sequence length="218" mass="23366">MMQTGLDFTLVEDLVAGVDEVGRGPLCGAVVTAAVILDPTRPILGLNDSKKLTEARREKLYVEIQEKALCWFIARAEVEEIDQLNILHATMLAMQRAVEGLSITPRLALIDGNRCPQLSVPSAPVVKGDSKVPAIAAASILAKVSRDREMAAFELIYPGYGIGGHKGYPTPVHLEALARLGPTPIHRRSFAPVRAAHEARATIMMGGSISPSVGLLQD</sequence>
<reference key="1">
    <citation type="journal article" date="2005" name="Proc. Natl. Acad. Sci. U.S.A.">
        <title>Comparison of the complete genome sequences of Pseudomonas syringae pv. syringae B728a and pv. tomato DC3000.</title>
        <authorList>
            <person name="Feil H."/>
            <person name="Feil W.S."/>
            <person name="Chain P."/>
            <person name="Larimer F."/>
            <person name="Dibartolo G."/>
            <person name="Copeland A."/>
            <person name="Lykidis A."/>
            <person name="Trong S."/>
            <person name="Nolan M."/>
            <person name="Goltsman E."/>
            <person name="Thiel J."/>
            <person name="Malfatti S."/>
            <person name="Loper J.E."/>
            <person name="Lapidus A."/>
            <person name="Detter J.C."/>
            <person name="Land M."/>
            <person name="Richardson P.M."/>
            <person name="Kyrpides N.C."/>
            <person name="Ivanova N."/>
            <person name="Lindow S.E."/>
        </authorList>
    </citation>
    <scope>NUCLEOTIDE SEQUENCE [LARGE SCALE GENOMIC DNA]</scope>
    <source>
        <strain>B728a</strain>
    </source>
</reference>
<comment type="function">
    <text evidence="1">Endonuclease that specifically degrades the RNA of RNA-DNA hybrids.</text>
</comment>
<comment type="catalytic activity">
    <reaction evidence="1">
        <text>Endonucleolytic cleavage to 5'-phosphomonoester.</text>
        <dbReference type="EC" id="3.1.26.4"/>
    </reaction>
</comment>
<comment type="cofactor">
    <cofactor evidence="1">
        <name>Mn(2+)</name>
        <dbReference type="ChEBI" id="CHEBI:29035"/>
    </cofactor>
    <cofactor evidence="1">
        <name>Mg(2+)</name>
        <dbReference type="ChEBI" id="CHEBI:18420"/>
    </cofactor>
    <text evidence="1">Manganese or magnesium. Binds 1 divalent metal ion per monomer in the absence of substrate. May bind a second metal ion after substrate binding.</text>
</comment>
<comment type="subcellular location">
    <subcellularLocation>
        <location evidence="1">Cytoplasm</location>
    </subcellularLocation>
</comment>
<comment type="similarity">
    <text evidence="1">Belongs to the RNase HII family.</text>
</comment>
<gene>
    <name evidence="1" type="primary">rnhB</name>
    <name type="ordered locus">Psyr_1357</name>
</gene>